<keyword id="KW-0169">Cobalamin biosynthesis</keyword>
<keyword id="KW-0315">Glutamine amidotransferase</keyword>
<keyword id="KW-1185">Reference proteome</keyword>
<protein>
    <recommendedName>
        <fullName evidence="1">Cobyric acid synthase</fullName>
    </recommendedName>
</protein>
<dbReference type="EMBL" id="CR555306">
    <property type="protein sequence ID" value="CAI08204.1"/>
    <property type="molecule type" value="Genomic_DNA"/>
</dbReference>
<dbReference type="RefSeq" id="WP_011237897.1">
    <property type="nucleotide sequence ID" value="NC_006513.1"/>
</dbReference>
<dbReference type="SMR" id="Q5P3B0"/>
<dbReference type="STRING" id="76114.ebA3690"/>
<dbReference type="KEGG" id="eba:ebA3690"/>
<dbReference type="eggNOG" id="COG1492">
    <property type="taxonomic scope" value="Bacteria"/>
</dbReference>
<dbReference type="HOGENOM" id="CLU_019250_2_2_4"/>
<dbReference type="OrthoDB" id="9808302at2"/>
<dbReference type="UniPathway" id="UPA00148"/>
<dbReference type="Proteomes" id="UP000006552">
    <property type="component" value="Chromosome"/>
</dbReference>
<dbReference type="GO" id="GO:0015420">
    <property type="term" value="F:ABC-type vitamin B12 transporter activity"/>
    <property type="evidence" value="ECO:0007669"/>
    <property type="project" value="UniProtKB-UniRule"/>
</dbReference>
<dbReference type="GO" id="GO:0003824">
    <property type="term" value="F:catalytic activity"/>
    <property type="evidence" value="ECO:0007669"/>
    <property type="project" value="InterPro"/>
</dbReference>
<dbReference type="GO" id="GO:0009236">
    <property type="term" value="P:cobalamin biosynthetic process"/>
    <property type="evidence" value="ECO:0007669"/>
    <property type="project" value="UniProtKB-UniRule"/>
</dbReference>
<dbReference type="CDD" id="cd05389">
    <property type="entry name" value="CobQ_N"/>
    <property type="match status" value="1"/>
</dbReference>
<dbReference type="CDD" id="cd01750">
    <property type="entry name" value="GATase1_CobQ"/>
    <property type="match status" value="1"/>
</dbReference>
<dbReference type="Gene3D" id="3.40.50.880">
    <property type="match status" value="1"/>
</dbReference>
<dbReference type="Gene3D" id="3.40.50.300">
    <property type="entry name" value="P-loop containing nucleotide triphosphate hydrolases"/>
    <property type="match status" value="1"/>
</dbReference>
<dbReference type="HAMAP" id="MF_00028">
    <property type="entry name" value="CobQ"/>
    <property type="match status" value="1"/>
</dbReference>
<dbReference type="InterPro" id="IPR029062">
    <property type="entry name" value="Class_I_gatase-like"/>
</dbReference>
<dbReference type="InterPro" id="IPR002586">
    <property type="entry name" value="CobQ/CobB/MinD/ParA_Nub-bd_dom"/>
</dbReference>
<dbReference type="InterPro" id="IPR033949">
    <property type="entry name" value="CobQ_GATase1"/>
</dbReference>
<dbReference type="InterPro" id="IPR047045">
    <property type="entry name" value="CobQ_N"/>
</dbReference>
<dbReference type="InterPro" id="IPR004459">
    <property type="entry name" value="CobQ_synth"/>
</dbReference>
<dbReference type="InterPro" id="IPR011698">
    <property type="entry name" value="GATase_3"/>
</dbReference>
<dbReference type="InterPro" id="IPR027417">
    <property type="entry name" value="P-loop_NTPase"/>
</dbReference>
<dbReference type="NCBIfam" id="TIGR00313">
    <property type="entry name" value="cobQ"/>
    <property type="match status" value="1"/>
</dbReference>
<dbReference type="NCBIfam" id="NF001989">
    <property type="entry name" value="PRK00784.1"/>
    <property type="match status" value="1"/>
</dbReference>
<dbReference type="PANTHER" id="PTHR21343:SF1">
    <property type="entry name" value="COBYRIC ACID SYNTHASE"/>
    <property type="match status" value="1"/>
</dbReference>
<dbReference type="PANTHER" id="PTHR21343">
    <property type="entry name" value="DETHIOBIOTIN SYNTHETASE"/>
    <property type="match status" value="1"/>
</dbReference>
<dbReference type="Pfam" id="PF01656">
    <property type="entry name" value="CbiA"/>
    <property type="match status" value="1"/>
</dbReference>
<dbReference type="Pfam" id="PF07685">
    <property type="entry name" value="GATase_3"/>
    <property type="match status" value="1"/>
</dbReference>
<dbReference type="SUPFAM" id="SSF52317">
    <property type="entry name" value="Class I glutamine amidotransferase-like"/>
    <property type="match status" value="1"/>
</dbReference>
<dbReference type="SUPFAM" id="SSF52540">
    <property type="entry name" value="P-loop containing nucleoside triphosphate hydrolases"/>
    <property type="match status" value="1"/>
</dbReference>
<dbReference type="PROSITE" id="PS51274">
    <property type="entry name" value="GATASE_COBBQ"/>
    <property type="match status" value="1"/>
</dbReference>
<gene>
    <name evidence="1" type="primary">cobQ</name>
    <name type="ordered locus">AZOSEA20790</name>
    <name type="ORF">ebA3690</name>
</gene>
<reference key="1">
    <citation type="journal article" date="2005" name="Arch. Microbiol.">
        <title>The genome sequence of an anaerobic aromatic-degrading denitrifying bacterium, strain EbN1.</title>
        <authorList>
            <person name="Rabus R."/>
            <person name="Kube M."/>
            <person name="Heider J."/>
            <person name="Beck A."/>
            <person name="Heitmann K."/>
            <person name="Widdel F."/>
            <person name="Reinhardt R."/>
        </authorList>
    </citation>
    <scope>NUCLEOTIDE SEQUENCE [LARGE SCALE GENOMIC DNA]</scope>
    <source>
        <strain>DSM 19018 / LMG 30748 / EbN1</strain>
    </source>
</reference>
<proteinExistence type="inferred from homology"/>
<accession>Q5P3B0</accession>
<comment type="function">
    <text evidence="1">Catalyzes amidations at positions B, D, E, and G on adenosylcobyrinic A,C-diamide. NH(2) groups are provided by glutamine, and one molecule of ATP is hydrogenolyzed for each amidation.</text>
</comment>
<comment type="pathway">
    <text evidence="1">Cofactor biosynthesis; adenosylcobalamin biosynthesis.</text>
</comment>
<comment type="similarity">
    <text evidence="1">Belongs to the CobB/CobQ family. CobQ subfamily.</text>
</comment>
<sequence length="489" mass="51739">MPHAVALMVQGTTSDAGKSTLVAGLARVLFRRGVRIAPFKPQNMALNSAVTVDGGEIGRAQALQALAAGLEPHSDFNPVLLKPSTDVGAQVVIHGRVALSLSARDYHAYKPTAMAAVMASWDRLVTAYECVLVEGAGSPAEINLRDRDIANMGFAEAADVPVILVADIDRGGVFAHLVGTLELLSPSEQARVKGFVINRFRGDLGLLQPGLDWLEARTGRPVLGVLPYLHGLFLDAEDALADARAEKGETRLTVVAPVYPRISNHTDLDALRLHPQVDFRWVGPGQAMPPADLIVLPGSKSVQADLAWLRAQGWDAAILRHLRYGGKLAGICGGFQMLGGWLHDPLGLEGGAGSIAGLGLLDMETTLAAEKRLENVCGTLNLPRSPAAAGYEIHMGVSRGAALDRPALQFADGRGDGALSADGQILGTYLHGLFDTPAALSALLAWAGAGEVESVDLAARREADLDRLADAIERHLDLGRLFPAEWVRG</sequence>
<evidence type="ECO:0000255" key="1">
    <source>
        <dbReference type="HAMAP-Rule" id="MF_00028"/>
    </source>
</evidence>
<name>COBQ_AROAE</name>
<organism>
    <name type="scientific">Aromatoleum aromaticum (strain DSM 19018 / LMG 30748 / EbN1)</name>
    <name type="common">Azoarcus sp. (strain EbN1)</name>
    <dbReference type="NCBI Taxonomy" id="76114"/>
    <lineage>
        <taxon>Bacteria</taxon>
        <taxon>Pseudomonadati</taxon>
        <taxon>Pseudomonadota</taxon>
        <taxon>Betaproteobacteria</taxon>
        <taxon>Rhodocyclales</taxon>
        <taxon>Rhodocyclaceae</taxon>
        <taxon>Aromatoleum</taxon>
    </lineage>
</organism>
<feature type="chain" id="PRO_1000002345" description="Cobyric acid synthase">
    <location>
        <begin position="1"/>
        <end position="489"/>
    </location>
</feature>
<feature type="domain" description="GATase cobBQ-type" evidence="1">
    <location>
        <begin position="251"/>
        <end position="439"/>
    </location>
</feature>
<feature type="active site" description="Nucleophile" evidence="1">
    <location>
        <position position="332"/>
    </location>
</feature>
<feature type="active site" evidence="1">
    <location>
        <position position="431"/>
    </location>
</feature>